<protein>
    <recommendedName>
        <fullName evidence="1">Large ribosomal subunit protein uL23</fullName>
    </recommendedName>
    <alternativeName>
        <fullName evidence="2">50S ribosomal protein L23</fullName>
    </alternativeName>
</protein>
<keyword id="KW-0002">3D-structure</keyword>
<keyword id="KW-1185">Reference proteome</keyword>
<keyword id="KW-0687">Ribonucleoprotein</keyword>
<keyword id="KW-0689">Ribosomal protein</keyword>
<keyword id="KW-0694">RNA-binding</keyword>
<keyword id="KW-0699">rRNA-binding</keyword>
<accession>P94269</accession>
<comment type="function">
    <text evidence="1">One of the early assembly proteins it binds 23S rRNA. One of the proteins that surrounds the polypeptide exit tunnel on the outside of the ribosome. Forms the main docking site for trigger factor binding to the ribosome.</text>
</comment>
<comment type="subunit">
    <text evidence="1">Part of the 50S ribosomal subunit. Contacts protein L29, and trigger factor when it is bound to the ribosome.</text>
</comment>
<comment type="similarity">
    <text evidence="1">Belongs to the universal ribosomal protein uL23 family.</text>
</comment>
<comment type="sequence caution" evidence="2">
    <conflict type="erroneous initiation">
        <sequence resource="EMBL-CDS" id="AAB36824"/>
    </conflict>
    <text>Extended N-terminus.</text>
</comment>
<dbReference type="EMBL" id="U78193">
    <property type="protein sequence ID" value="AAB36824.1"/>
    <property type="status" value="ALT_INIT"/>
    <property type="molecule type" value="Genomic_DNA"/>
</dbReference>
<dbReference type="EMBL" id="AE000783">
    <property type="protein sequence ID" value="AAC66862.2"/>
    <property type="molecule type" value="Genomic_DNA"/>
</dbReference>
<dbReference type="PIR" id="G70159">
    <property type="entry name" value="G70159"/>
</dbReference>
<dbReference type="RefSeq" id="NP_212614.2">
    <property type="nucleotide sequence ID" value="NC_001318.1"/>
</dbReference>
<dbReference type="RefSeq" id="WP_002557071.1">
    <property type="nucleotide sequence ID" value="NC_001318.1"/>
</dbReference>
<dbReference type="PDB" id="8FMW">
    <property type="method" value="EM"/>
    <property type="resolution" value="2.86 A"/>
    <property type="chains" value="AV=1-98"/>
</dbReference>
<dbReference type="PDB" id="8FN2">
    <property type="method" value="EM"/>
    <property type="resolution" value="3.40 A"/>
    <property type="chains" value="V=1-98"/>
</dbReference>
<dbReference type="PDBsum" id="8FMW"/>
<dbReference type="PDBsum" id="8FN2"/>
<dbReference type="EMDB" id="EMD-29298"/>
<dbReference type="EMDB" id="EMD-29304"/>
<dbReference type="SMR" id="P94269"/>
<dbReference type="STRING" id="224326.BB_0480"/>
<dbReference type="PaxDb" id="224326-BB_0480"/>
<dbReference type="EnsemblBacteria" id="AAC66862">
    <property type="protein sequence ID" value="AAC66862"/>
    <property type="gene ID" value="BB_0480"/>
</dbReference>
<dbReference type="GeneID" id="77265327"/>
<dbReference type="KEGG" id="bbu:BB_0480"/>
<dbReference type="PATRIC" id="fig|224326.49.peg.871"/>
<dbReference type="HOGENOM" id="CLU_037562_3_1_12"/>
<dbReference type="OrthoDB" id="9793353at2"/>
<dbReference type="Proteomes" id="UP000001807">
    <property type="component" value="Chromosome"/>
</dbReference>
<dbReference type="GO" id="GO:1990904">
    <property type="term" value="C:ribonucleoprotein complex"/>
    <property type="evidence" value="ECO:0007669"/>
    <property type="project" value="UniProtKB-KW"/>
</dbReference>
<dbReference type="GO" id="GO:0005840">
    <property type="term" value="C:ribosome"/>
    <property type="evidence" value="ECO:0007669"/>
    <property type="project" value="UniProtKB-KW"/>
</dbReference>
<dbReference type="GO" id="GO:0019843">
    <property type="term" value="F:rRNA binding"/>
    <property type="evidence" value="ECO:0007669"/>
    <property type="project" value="UniProtKB-UniRule"/>
</dbReference>
<dbReference type="GO" id="GO:0003735">
    <property type="term" value="F:structural constituent of ribosome"/>
    <property type="evidence" value="ECO:0007669"/>
    <property type="project" value="InterPro"/>
</dbReference>
<dbReference type="GO" id="GO:0006412">
    <property type="term" value="P:translation"/>
    <property type="evidence" value="ECO:0007669"/>
    <property type="project" value="UniProtKB-UniRule"/>
</dbReference>
<dbReference type="Gene3D" id="3.30.70.330">
    <property type="match status" value="1"/>
</dbReference>
<dbReference type="HAMAP" id="MF_01369_B">
    <property type="entry name" value="Ribosomal_uL23_B"/>
    <property type="match status" value="1"/>
</dbReference>
<dbReference type="InterPro" id="IPR012677">
    <property type="entry name" value="Nucleotide-bd_a/b_plait_sf"/>
</dbReference>
<dbReference type="InterPro" id="IPR013025">
    <property type="entry name" value="Ribosomal_uL23-like"/>
</dbReference>
<dbReference type="InterPro" id="IPR012678">
    <property type="entry name" value="Ribosomal_uL23/eL15/eS24_sf"/>
</dbReference>
<dbReference type="NCBIfam" id="NF004363">
    <property type="entry name" value="PRK05738.2-4"/>
    <property type="match status" value="1"/>
</dbReference>
<dbReference type="PANTHER" id="PTHR11620">
    <property type="entry name" value="60S RIBOSOMAL PROTEIN L23A"/>
    <property type="match status" value="1"/>
</dbReference>
<dbReference type="Pfam" id="PF00276">
    <property type="entry name" value="Ribosomal_L23"/>
    <property type="match status" value="1"/>
</dbReference>
<dbReference type="SUPFAM" id="SSF54189">
    <property type="entry name" value="Ribosomal proteins S24e, L23 and L15e"/>
    <property type="match status" value="1"/>
</dbReference>
<evidence type="ECO:0000255" key="1">
    <source>
        <dbReference type="HAMAP-Rule" id="MF_01369"/>
    </source>
</evidence>
<evidence type="ECO:0000305" key="2"/>
<evidence type="ECO:0007829" key="3">
    <source>
        <dbReference type="PDB" id="8FN2"/>
    </source>
</evidence>
<proteinExistence type="evidence at protein level"/>
<sequence>MKAYDIIVSPMLTEKTNTQRESINVYVFKVNKRANKKEVGAAIKELFNVTPVSCNLLNIKSKAKVVVSRKGYPIGKGKTSSWKKAYVYLKKEDKIDIF</sequence>
<organism>
    <name type="scientific">Borreliella burgdorferi (strain ATCC 35210 / DSM 4680 / CIP 102532 / B31)</name>
    <name type="common">Borrelia burgdorferi</name>
    <dbReference type="NCBI Taxonomy" id="224326"/>
    <lineage>
        <taxon>Bacteria</taxon>
        <taxon>Pseudomonadati</taxon>
        <taxon>Spirochaetota</taxon>
        <taxon>Spirochaetia</taxon>
        <taxon>Spirochaetales</taxon>
        <taxon>Borreliaceae</taxon>
        <taxon>Borreliella</taxon>
    </lineage>
</organism>
<reference key="1">
    <citation type="submission" date="1996-12" db="EMBL/GenBank/DDBJ databases">
        <authorList>
            <person name="Perlee L."/>
            <person name="Qi H."/>
            <person name="Schwartz I."/>
        </authorList>
    </citation>
    <scope>NUCLEOTIDE SEQUENCE [GENOMIC DNA]</scope>
    <source>
        <strain>ATCC 35210 / DSM 4680 / CIP 102532 / B31</strain>
    </source>
</reference>
<reference key="2">
    <citation type="journal article" date="1997" name="Nature">
        <title>Genomic sequence of a Lyme disease spirochaete, Borrelia burgdorferi.</title>
        <authorList>
            <person name="Fraser C.M."/>
            <person name="Casjens S."/>
            <person name="Huang W.M."/>
            <person name="Sutton G.G."/>
            <person name="Clayton R.A."/>
            <person name="Lathigra R."/>
            <person name="White O."/>
            <person name="Ketchum K.A."/>
            <person name="Dodson R.J."/>
            <person name="Hickey E.K."/>
            <person name="Gwinn M.L."/>
            <person name="Dougherty B.A."/>
            <person name="Tomb J.-F."/>
            <person name="Fleischmann R.D."/>
            <person name="Richardson D.L."/>
            <person name="Peterson J.D."/>
            <person name="Kerlavage A.R."/>
            <person name="Quackenbush J."/>
            <person name="Salzberg S.L."/>
            <person name="Hanson M."/>
            <person name="van Vugt R."/>
            <person name="Palmer N."/>
            <person name="Adams M.D."/>
            <person name="Gocayne J.D."/>
            <person name="Weidman J.F."/>
            <person name="Utterback T.R."/>
            <person name="Watthey L."/>
            <person name="McDonald L.A."/>
            <person name="Artiach P."/>
            <person name="Bowman C."/>
            <person name="Garland S.A."/>
            <person name="Fujii C."/>
            <person name="Cotton M.D."/>
            <person name="Horst K."/>
            <person name="Roberts K.M."/>
            <person name="Hatch B."/>
            <person name="Smith H.O."/>
            <person name="Venter J.C."/>
        </authorList>
    </citation>
    <scope>NUCLEOTIDE SEQUENCE [LARGE SCALE GENOMIC DNA]</scope>
    <source>
        <strain>ATCC 35210 / DSM 4680 / CIP 102532 / B31</strain>
    </source>
</reference>
<feature type="chain" id="PRO_0000129399" description="Large ribosomal subunit protein uL23">
    <location>
        <begin position="1"/>
        <end position="98"/>
    </location>
</feature>
<feature type="turn" evidence="3">
    <location>
        <begin position="3"/>
        <end position="6"/>
    </location>
</feature>
<feature type="strand" evidence="3">
    <location>
        <begin position="7"/>
        <end position="10"/>
    </location>
</feature>
<feature type="helix" evidence="3">
    <location>
        <begin position="14"/>
        <end position="23"/>
    </location>
</feature>
<feature type="strand" evidence="3">
    <location>
        <begin position="25"/>
        <end position="30"/>
    </location>
</feature>
<feature type="helix" evidence="3">
    <location>
        <begin position="36"/>
        <end position="47"/>
    </location>
</feature>
<feature type="strand" evidence="3">
    <location>
        <begin position="52"/>
        <end position="59"/>
    </location>
</feature>
<feature type="strand" evidence="3">
    <location>
        <begin position="63"/>
        <end position="67"/>
    </location>
</feature>
<feature type="strand" evidence="3">
    <location>
        <begin position="73"/>
        <end position="78"/>
    </location>
</feature>
<feature type="strand" evidence="3">
    <location>
        <begin position="82"/>
        <end position="88"/>
    </location>
</feature>
<name>RL23_BORBU</name>
<gene>
    <name evidence="1" type="primary">rplW</name>
    <name type="ordered locus">BB_0480</name>
</gene>